<dbReference type="EMBL" id="AP001800">
    <property type="protein sequence ID" value="BAD81293.1"/>
    <property type="status" value="ALT_SEQ"/>
    <property type="molecule type" value="Genomic_DNA"/>
</dbReference>
<dbReference type="EMBL" id="AP002094">
    <property type="protein sequence ID" value="BAD81370.1"/>
    <property type="status" value="ALT_SEQ"/>
    <property type="molecule type" value="Genomic_DNA"/>
</dbReference>
<dbReference type="EMBL" id="AP014957">
    <property type="status" value="NOT_ANNOTATED_CDS"/>
    <property type="molecule type" value="Genomic_DNA"/>
</dbReference>
<dbReference type="EMBL" id="CM000138">
    <property type="protein sequence ID" value="EEE54133.1"/>
    <property type="status" value="ALT_SEQ"/>
    <property type="molecule type" value="Genomic_DNA"/>
</dbReference>
<dbReference type="RefSeq" id="XP_015618055.1">
    <property type="nucleotide sequence ID" value="XM_015762569.1"/>
</dbReference>
<dbReference type="FunCoup" id="Q5NAY7">
    <property type="interactions" value="296"/>
</dbReference>
<dbReference type="STRING" id="39947.Q5NAY7"/>
<dbReference type="PaxDb" id="39947-Q5NAY7"/>
<dbReference type="GeneID" id="9272318"/>
<dbReference type="KEGG" id="osa:9272318"/>
<dbReference type="eggNOG" id="KOG2881">
    <property type="taxonomic scope" value="Eukaryota"/>
</dbReference>
<dbReference type="HOGENOM" id="CLU_050130_0_0_1"/>
<dbReference type="InParanoid" id="Q5NAY7"/>
<dbReference type="OrthoDB" id="442680at2759"/>
<dbReference type="Proteomes" id="UP000000763">
    <property type="component" value="Chromosome 1"/>
</dbReference>
<dbReference type="Proteomes" id="UP000007752">
    <property type="component" value="Chromosome 1"/>
</dbReference>
<dbReference type="Proteomes" id="UP000059680">
    <property type="component" value="Chromosome 1"/>
</dbReference>
<dbReference type="GO" id="GO:0031969">
    <property type="term" value="C:chloroplast membrane"/>
    <property type="evidence" value="ECO:0007669"/>
    <property type="project" value="UniProtKB-SubCell"/>
</dbReference>
<dbReference type="GO" id="GO:0009535">
    <property type="term" value="C:chloroplast thylakoid membrane"/>
    <property type="evidence" value="ECO:0000318"/>
    <property type="project" value="GO_Central"/>
</dbReference>
<dbReference type="GO" id="GO:0005794">
    <property type="term" value="C:Golgi apparatus"/>
    <property type="evidence" value="ECO:0000318"/>
    <property type="project" value="GO_Central"/>
</dbReference>
<dbReference type="GO" id="GO:0015085">
    <property type="term" value="F:calcium ion transmembrane transporter activity"/>
    <property type="evidence" value="ECO:0000318"/>
    <property type="project" value="GO_Central"/>
</dbReference>
<dbReference type="GO" id="GO:0005384">
    <property type="term" value="F:manganese ion transmembrane transporter activity"/>
    <property type="evidence" value="ECO:0000318"/>
    <property type="project" value="GO_Central"/>
</dbReference>
<dbReference type="GO" id="GO:0070588">
    <property type="term" value="P:calcium ion transmembrane transport"/>
    <property type="evidence" value="ECO:0000318"/>
    <property type="project" value="GO_Central"/>
</dbReference>
<dbReference type="GO" id="GO:0032468">
    <property type="term" value="P:Golgi calcium ion homeostasis"/>
    <property type="evidence" value="ECO:0000318"/>
    <property type="project" value="GO_Central"/>
</dbReference>
<dbReference type="GO" id="GO:0032472">
    <property type="term" value="P:Golgi calcium ion transport"/>
    <property type="evidence" value="ECO:0000318"/>
    <property type="project" value="GO_Central"/>
</dbReference>
<dbReference type="GO" id="GO:0071421">
    <property type="term" value="P:manganese ion transmembrane transport"/>
    <property type="evidence" value="ECO:0000318"/>
    <property type="project" value="GO_Central"/>
</dbReference>
<dbReference type="InterPro" id="IPR001727">
    <property type="entry name" value="GDT1-like"/>
</dbReference>
<dbReference type="PANTHER" id="PTHR12608:SF6">
    <property type="entry name" value="PROTEIN PAM71, CHLOROPLASTIC"/>
    <property type="match status" value="1"/>
</dbReference>
<dbReference type="PANTHER" id="PTHR12608">
    <property type="entry name" value="TRANSMEMBRANE PROTEIN HTP-1 RELATED"/>
    <property type="match status" value="1"/>
</dbReference>
<dbReference type="Pfam" id="PF01169">
    <property type="entry name" value="GDT1"/>
    <property type="match status" value="2"/>
</dbReference>
<protein>
    <recommendedName>
        <fullName>GDT1-like protein 1, chloroplastic</fullName>
    </recommendedName>
</protein>
<sequence length="341" mass="35015">MASVASSTVFASSLPHHRATTRAPPTPPRIPRRARLPGRSVVSCLPKRGSEKLVVTRASDEEGPPEPAGQGRGGGRAWPSLDASSCGLALAAAAGVLMLQGSQQALAGTEFMGMQDVVGDLGDISTGFASAFLLIFFSELGDRTFFIAALLAARNSGAIIFLGTFGALAVMTIISVVLGRAFHYVDGIIPFSFGGTDFPVDDFLAACLLVYYGITTLLDAASGDEEKMNEEQEEAELAVSKFLGNGAGIISAASTIASTFVLVFIAEWGDKSFFSTIALAAASSPLGVIAGSLAGHAVATLIAVLGGSLLGTFLSEKIVAYIGGSLFLAFAAVTLVEIVNS</sequence>
<feature type="transit peptide" description="Chloroplast" evidence="1">
    <location>
        <begin position="1"/>
        <end position="57"/>
    </location>
</feature>
<feature type="chain" id="PRO_0000398770" description="GDT1-like protein 1, chloroplastic">
    <location>
        <begin position="58"/>
        <end position="341"/>
    </location>
</feature>
<feature type="transmembrane region" description="Helical" evidence="1">
    <location>
        <begin position="79"/>
        <end position="99"/>
    </location>
</feature>
<feature type="transmembrane region" description="Helical" evidence="1">
    <location>
        <begin position="117"/>
        <end position="137"/>
    </location>
</feature>
<feature type="transmembrane region" description="Helical" evidence="1">
    <location>
        <begin position="158"/>
        <end position="178"/>
    </location>
</feature>
<feature type="transmembrane region" description="Helical" evidence="1">
    <location>
        <begin position="203"/>
        <end position="223"/>
    </location>
</feature>
<feature type="transmembrane region" description="Helical" evidence="1">
    <location>
        <begin position="246"/>
        <end position="266"/>
    </location>
</feature>
<feature type="transmembrane region" description="Helical" evidence="1">
    <location>
        <begin position="286"/>
        <end position="306"/>
    </location>
</feature>
<feature type="transmembrane region" description="Helical" evidence="1">
    <location>
        <begin position="318"/>
        <end position="338"/>
    </location>
</feature>
<feature type="region of interest" description="Disordered" evidence="2">
    <location>
        <begin position="1"/>
        <end position="41"/>
    </location>
</feature>
<feature type="region of interest" description="Disordered" evidence="2">
    <location>
        <begin position="54"/>
        <end position="76"/>
    </location>
</feature>
<feature type="compositionally biased region" description="Low complexity" evidence="2">
    <location>
        <begin position="1"/>
        <end position="13"/>
    </location>
</feature>
<organism>
    <name type="scientific">Oryza sativa subsp. japonica</name>
    <name type="common">Rice</name>
    <dbReference type="NCBI Taxonomy" id="39947"/>
    <lineage>
        <taxon>Eukaryota</taxon>
        <taxon>Viridiplantae</taxon>
        <taxon>Streptophyta</taxon>
        <taxon>Embryophyta</taxon>
        <taxon>Tracheophyta</taxon>
        <taxon>Spermatophyta</taxon>
        <taxon>Magnoliopsida</taxon>
        <taxon>Liliopsida</taxon>
        <taxon>Poales</taxon>
        <taxon>Poaceae</taxon>
        <taxon>BOP clade</taxon>
        <taxon>Oryzoideae</taxon>
        <taxon>Oryzeae</taxon>
        <taxon>Oryzinae</taxon>
        <taxon>Oryza</taxon>
        <taxon>Oryza sativa</taxon>
    </lineage>
</organism>
<comment type="subcellular location">
    <subcellularLocation>
        <location evidence="3">Plastid</location>
        <location evidence="3">Chloroplast membrane</location>
        <topology evidence="3">Multi-pass membrane protein</topology>
    </subcellularLocation>
</comment>
<comment type="similarity">
    <text evidence="3">Belongs to the GDT1 family.</text>
</comment>
<comment type="sequence caution" evidence="3">
    <conflict type="erroneous gene model prediction">
        <sequence resource="EMBL-CDS" id="BAD81293"/>
    </conflict>
</comment>
<comment type="sequence caution" evidence="3">
    <conflict type="erroneous gene model prediction">
        <sequence resource="EMBL-CDS" id="BAD81370"/>
    </conflict>
</comment>
<comment type="sequence caution" evidence="3">
    <conflict type="erroneous gene model prediction">
        <sequence resource="EMBL-CDS" id="EEE54133"/>
    </conflict>
</comment>
<reference key="1">
    <citation type="journal article" date="2002" name="Nature">
        <title>The genome sequence and structure of rice chromosome 1.</title>
        <authorList>
            <person name="Sasaki T."/>
            <person name="Matsumoto T."/>
            <person name="Yamamoto K."/>
            <person name="Sakata K."/>
            <person name="Baba T."/>
            <person name="Katayose Y."/>
            <person name="Wu J."/>
            <person name="Niimura Y."/>
            <person name="Cheng Z."/>
            <person name="Nagamura Y."/>
            <person name="Antonio B.A."/>
            <person name="Kanamori H."/>
            <person name="Hosokawa S."/>
            <person name="Masukawa M."/>
            <person name="Arikawa K."/>
            <person name="Chiden Y."/>
            <person name="Hayashi M."/>
            <person name="Okamoto M."/>
            <person name="Ando T."/>
            <person name="Aoki H."/>
            <person name="Arita K."/>
            <person name="Hamada M."/>
            <person name="Harada C."/>
            <person name="Hijishita S."/>
            <person name="Honda M."/>
            <person name="Ichikawa Y."/>
            <person name="Idonuma A."/>
            <person name="Iijima M."/>
            <person name="Ikeda M."/>
            <person name="Ikeno M."/>
            <person name="Ito S."/>
            <person name="Ito T."/>
            <person name="Ito Y."/>
            <person name="Ito Y."/>
            <person name="Iwabuchi A."/>
            <person name="Kamiya K."/>
            <person name="Karasawa W."/>
            <person name="Katagiri S."/>
            <person name="Kikuta A."/>
            <person name="Kobayashi N."/>
            <person name="Kono I."/>
            <person name="Machita K."/>
            <person name="Maehara T."/>
            <person name="Mizuno H."/>
            <person name="Mizubayashi T."/>
            <person name="Mukai Y."/>
            <person name="Nagasaki H."/>
            <person name="Nakashima M."/>
            <person name="Nakama Y."/>
            <person name="Nakamichi Y."/>
            <person name="Nakamura M."/>
            <person name="Namiki N."/>
            <person name="Negishi M."/>
            <person name="Ohta I."/>
            <person name="Ono N."/>
            <person name="Saji S."/>
            <person name="Sakai K."/>
            <person name="Shibata M."/>
            <person name="Shimokawa T."/>
            <person name="Shomura A."/>
            <person name="Song J."/>
            <person name="Takazaki Y."/>
            <person name="Terasawa K."/>
            <person name="Tsuji K."/>
            <person name="Waki K."/>
            <person name="Yamagata H."/>
            <person name="Yamane H."/>
            <person name="Yoshiki S."/>
            <person name="Yoshihara R."/>
            <person name="Yukawa K."/>
            <person name="Zhong H."/>
            <person name="Iwama H."/>
            <person name="Endo T."/>
            <person name="Ito H."/>
            <person name="Hahn J.H."/>
            <person name="Kim H.-I."/>
            <person name="Eun M.-Y."/>
            <person name="Yano M."/>
            <person name="Jiang J."/>
            <person name="Gojobori T."/>
        </authorList>
    </citation>
    <scope>NUCLEOTIDE SEQUENCE [LARGE SCALE GENOMIC DNA]</scope>
    <source>
        <strain>cv. Nipponbare</strain>
    </source>
</reference>
<reference key="2">
    <citation type="journal article" date="2005" name="Nature">
        <title>The map-based sequence of the rice genome.</title>
        <authorList>
            <consortium name="International rice genome sequencing project (IRGSP)"/>
        </authorList>
    </citation>
    <scope>NUCLEOTIDE SEQUENCE [LARGE SCALE GENOMIC DNA]</scope>
    <source>
        <strain>cv. Nipponbare</strain>
    </source>
</reference>
<reference key="3">
    <citation type="journal article" date="2013" name="Rice">
        <title>Improvement of the Oryza sativa Nipponbare reference genome using next generation sequence and optical map data.</title>
        <authorList>
            <person name="Kawahara Y."/>
            <person name="de la Bastide M."/>
            <person name="Hamilton J.P."/>
            <person name="Kanamori H."/>
            <person name="McCombie W.R."/>
            <person name="Ouyang S."/>
            <person name="Schwartz D.C."/>
            <person name="Tanaka T."/>
            <person name="Wu J."/>
            <person name="Zhou S."/>
            <person name="Childs K.L."/>
            <person name="Davidson R.M."/>
            <person name="Lin H."/>
            <person name="Quesada-Ocampo L."/>
            <person name="Vaillancourt B."/>
            <person name="Sakai H."/>
            <person name="Lee S.S."/>
            <person name="Kim J."/>
            <person name="Numa H."/>
            <person name="Itoh T."/>
            <person name="Buell C.R."/>
            <person name="Matsumoto T."/>
        </authorList>
    </citation>
    <scope>GENOME REANNOTATION</scope>
    <source>
        <strain>cv. Nipponbare</strain>
    </source>
</reference>
<reference key="4">
    <citation type="journal article" date="2005" name="PLoS Biol.">
        <title>The genomes of Oryza sativa: a history of duplications.</title>
        <authorList>
            <person name="Yu J."/>
            <person name="Wang J."/>
            <person name="Lin W."/>
            <person name="Li S."/>
            <person name="Li H."/>
            <person name="Zhou J."/>
            <person name="Ni P."/>
            <person name="Dong W."/>
            <person name="Hu S."/>
            <person name="Zeng C."/>
            <person name="Zhang J."/>
            <person name="Zhang Y."/>
            <person name="Li R."/>
            <person name="Xu Z."/>
            <person name="Li S."/>
            <person name="Li X."/>
            <person name="Zheng H."/>
            <person name="Cong L."/>
            <person name="Lin L."/>
            <person name="Yin J."/>
            <person name="Geng J."/>
            <person name="Li G."/>
            <person name="Shi J."/>
            <person name="Liu J."/>
            <person name="Lv H."/>
            <person name="Li J."/>
            <person name="Wang J."/>
            <person name="Deng Y."/>
            <person name="Ran L."/>
            <person name="Shi X."/>
            <person name="Wang X."/>
            <person name="Wu Q."/>
            <person name="Li C."/>
            <person name="Ren X."/>
            <person name="Wang J."/>
            <person name="Wang X."/>
            <person name="Li D."/>
            <person name="Liu D."/>
            <person name="Zhang X."/>
            <person name="Ji Z."/>
            <person name="Zhao W."/>
            <person name="Sun Y."/>
            <person name="Zhang Z."/>
            <person name="Bao J."/>
            <person name="Han Y."/>
            <person name="Dong L."/>
            <person name="Ji J."/>
            <person name="Chen P."/>
            <person name="Wu S."/>
            <person name="Liu J."/>
            <person name="Xiao Y."/>
            <person name="Bu D."/>
            <person name="Tan J."/>
            <person name="Yang L."/>
            <person name="Ye C."/>
            <person name="Zhang J."/>
            <person name="Xu J."/>
            <person name="Zhou Y."/>
            <person name="Yu Y."/>
            <person name="Zhang B."/>
            <person name="Zhuang S."/>
            <person name="Wei H."/>
            <person name="Liu B."/>
            <person name="Lei M."/>
            <person name="Yu H."/>
            <person name="Li Y."/>
            <person name="Xu H."/>
            <person name="Wei S."/>
            <person name="He X."/>
            <person name="Fang L."/>
            <person name="Zhang Z."/>
            <person name="Zhang Y."/>
            <person name="Huang X."/>
            <person name="Su Z."/>
            <person name="Tong W."/>
            <person name="Li J."/>
            <person name="Tong Z."/>
            <person name="Li S."/>
            <person name="Ye J."/>
            <person name="Wang L."/>
            <person name="Fang L."/>
            <person name="Lei T."/>
            <person name="Chen C.-S."/>
            <person name="Chen H.-C."/>
            <person name="Xu Z."/>
            <person name="Li H."/>
            <person name="Huang H."/>
            <person name="Zhang F."/>
            <person name="Xu H."/>
            <person name="Li N."/>
            <person name="Zhao C."/>
            <person name="Li S."/>
            <person name="Dong L."/>
            <person name="Huang Y."/>
            <person name="Li L."/>
            <person name="Xi Y."/>
            <person name="Qi Q."/>
            <person name="Li W."/>
            <person name="Zhang B."/>
            <person name="Hu W."/>
            <person name="Zhang Y."/>
            <person name="Tian X."/>
            <person name="Jiao Y."/>
            <person name="Liang X."/>
            <person name="Jin J."/>
            <person name="Gao L."/>
            <person name="Zheng W."/>
            <person name="Hao B."/>
            <person name="Liu S.-M."/>
            <person name="Wang W."/>
            <person name="Yuan L."/>
            <person name="Cao M."/>
            <person name="McDermott J."/>
            <person name="Samudrala R."/>
            <person name="Wang J."/>
            <person name="Wong G.K.-S."/>
            <person name="Yang H."/>
        </authorList>
    </citation>
    <scope>NUCLEOTIDE SEQUENCE [LARGE SCALE GENOMIC DNA]</scope>
    <source>
        <strain>cv. Nipponbare</strain>
    </source>
</reference>
<name>GDT11_ORYSJ</name>
<evidence type="ECO:0000255" key="1"/>
<evidence type="ECO:0000256" key="2">
    <source>
        <dbReference type="SAM" id="MobiDB-lite"/>
    </source>
</evidence>
<evidence type="ECO:0000305" key="3"/>
<keyword id="KW-0150">Chloroplast</keyword>
<keyword id="KW-0472">Membrane</keyword>
<keyword id="KW-0934">Plastid</keyword>
<keyword id="KW-1185">Reference proteome</keyword>
<keyword id="KW-0809">Transit peptide</keyword>
<keyword id="KW-0812">Transmembrane</keyword>
<keyword id="KW-1133">Transmembrane helix</keyword>
<accession>Q5NAY7</accession>
<accession>B9EU51</accession>
<proteinExistence type="inferred from homology"/>
<gene>
    <name type="ordered locus">Os01g0221700</name>
    <name type="ordered locus">LOC_Os01g12220</name>
    <name type="ORF">OsJ_00919</name>
    <name type="ORF">P0443E05.5</name>
    <name type="ORF">P0483F08.42</name>
</gene>